<feature type="chain" id="PRO_0000219614" description="Photosystem II reaction center protein I">
    <location>
        <begin position="1"/>
        <end position="36"/>
    </location>
</feature>
<feature type="transmembrane region" description="Helical" evidence="1">
    <location>
        <begin position="4"/>
        <end position="24"/>
    </location>
</feature>
<protein>
    <recommendedName>
        <fullName evidence="1">Photosystem II reaction center protein I</fullName>
        <shortName evidence="1">PSII-I</shortName>
    </recommendedName>
    <alternativeName>
        <fullName evidence="1">PSII 4.8 kDa protein</fullName>
    </alternativeName>
</protein>
<evidence type="ECO:0000255" key="1">
    <source>
        <dbReference type="HAMAP-Rule" id="MF_01316"/>
    </source>
</evidence>
<name>PSBI_ADICA</name>
<geneLocation type="chloroplast"/>
<proteinExistence type="evidence at transcript level"/>
<keyword id="KW-0150">Chloroplast</keyword>
<keyword id="KW-0472">Membrane</keyword>
<keyword id="KW-0602">Photosynthesis</keyword>
<keyword id="KW-0604">Photosystem II</keyword>
<keyword id="KW-0934">Plastid</keyword>
<keyword id="KW-0674">Reaction center</keyword>
<keyword id="KW-0793">Thylakoid</keyword>
<keyword id="KW-0812">Transmembrane</keyword>
<keyword id="KW-1133">Transmembrane helix</keyword>
<dbReference type="EMBL" id="AY178864">
    <property type="protein sequence ID" value="AAP29375.1"/>
    <property type="molecule type" value="Genomic_DNA"/>
</dbReference>
<dbReference type="RefSeq" id="NP_848043.1">
    <property type="nucleotide sequence ID" value="NC_004766.1"/>
</dbReference>
<dbReference type="SMR" id="Q85FN6"/>
<dbReference type="GeneID" id="807387"/>
<dbReference type="GO" id="GO:0009535">
    <property type="term" value="C:chloroplast thylakoid membrane"/>
    <property type="evidence" value="ECO:0007669"/>
    <property type="project" value="UniProtKB-SubCell"/>
</dbReference>
<dbReference type="GO" id="GO:0009539">
    <property type="term" value="C:photosystem II reaction center"/>
    <property type="evidence" value="ECO:0007669"/>
    <property type="project" value="InterPro"/>
</dbReference>
<dbReference type="GO" id="GO:0015979">
    <property type="term" value="P:photosynthesis"/>
    <property type="evidence" value="ECO:0007669"/>
    <property type="project" value="UniProtKB-UniRule"/>
</dbReference>
<dbReference type="HAMAP" id="MF_01316">
    <property type="entry name" value="PSII_PsbI"/>
    <property type="match status" value="1"/>
</dbReference>
<dbReference type="InterPro" id="IPR003686">
    <property type="entry name" value="PSII_PsbI"/>
</dbReference>
<dbReference type="InterPro" id="IPR037271">
    <property type="entry name" value="PSII_PsbI_sf"/>
</dbReference>
<dbReference type="NCBIfam" id="NF002735">
    <property type="entry name" value="PRK02655.1"/>
    <property type="match status" value="1"/>
</dbReference>
<dbReference type="PANTHER" id="PTHR35772">
    <property type="entry name" value="PHOTOSYSTEM II REACTION CENTER PROTEIN I"/>
    <property type="match status" value="1"/>
</dbReference>
<dbReference type="PANTHER" id="PTHR35772:SF1">
    <property type="entry name" value="PHOTOSYSTEM II REACTION CENTER PROTEIN I"/>
    <property type="match status" value="1"/>
</dbReference>
<dbReference type="Pfam" id="PF02532">
    <property type="entry name" value="PsbI"/>
    <property type="match status" value="1"/>
</dbReference>
<dbReference type="SUPFAM" id="SSF161041">
    <property type="entry name" value="Photosystem II reaction center protein I, PsbI"/>
    <property type="match status" value="1"/>
</dbReference>
<organism>
    <name type="scientific">Adiantum capillus-veneris</name>
    <name type="common">Maidenhair fern</name>
    <dbReference type="NCBI Taxonomy" id="13818"/>
    <lineage>
        <taxon>Eukaryota</taxon>
        <taxon>Viridiplantae</taxon>
        <taxon>Streptophyta</taxon>
        <taxon>Embryophyta</taxon>
        <taxon>Tracheophyta</taxon>
        <taxon>Polypodiopsida</taxon>
        <taxon>Polypodiidae</taxon>
        <taxon>Polypodiales</taxon>
        <taxon>Pteridineae</taxon>
        <taxon>Pteridaceae</taxon>
        <taxon>Vittarioideae</taxon>
        <taxon>Adiantum</taxon>
    </lineage>
</organism>
<reference key="1">
    <citation type="journal article" date="2003" name="DNA Res.">
        <title>Complete nucleotide sequence of the chloroplast genome from a leptosporangiate fern, Adiantum capillus-veneris L.</title>
        <authorList>
            <person name="Wolf P.G."/>
            <person name="Rowe C.A."/>
            <person name="Sinclair R.B."/>
            <person name="Hasebe M."/>
        </authorList>
    </citation>
    <scope>NUCLEOTIDE SEQUENCE [LARGE SCALE GENOMIC DNA]</scope>
</reference>
<reference key="2">
    <citation type="journal article" date="2004" name="Gene">
        <title>High levels of RNA editing in a vascular plant chloroplast genome: analysis of transcripts from the fern Adiantum capillus-veneris.</title>
        <authorList>
            <person name="Wolf P.G."/>
            <person name="Rowe C.A."/>
            <person name="Hasebe M."/>
        </authorList>
    </citation>
    <scope>NUCLEOTIDE SEQUENCE [GENOMIC DNA]</scope>
    <scope>ABSENCE OF RNA EDITING</scope>
    <source>
        <tissue>Frond</tissue>
    </source>
</reference>
<accession>Q85FN6</accession>
<gene>
    <name evidence="1" type="primary">psbI</name>
</gene>
<sequence length="36" mass="4109">MLTLKLFVYAVVIFFVSLFVFGFLSNDPGRNPGRKD</sequence>
<comment type="function">
    <text evidence="1">One of the components of the core complex of photosystem II (PSII), required for its stability and/or assembly. PSII is a light-driven water:plastoquinone oxidoreductase that uses light energy to abstract electrons from H(2)O, generating O(2) and a proton gradient subsequently used for ATP formation. It consists of a core antenna complex that captures photons, and an electron transfer chain that converts photonic excitation into a charge separation.</text>
</comment>
<comment type="subunit">
    <text evidence="1">PSII is composed of 1 copy each of membrane proteins PsbA, PsbB, PsbC, PsbD, PsbE, PsbF, PsbH, PsbI, PsbJ, PsbK, PsbL, PsbM, PsbT, PsbX, PsbY, PsbZ, Psb30/Ycf12, at least 3 peripheral proteins of the oxygen-evolving complex and a large number of cofactors. It forms dimeric complexes.</text>
</comment>
<comment type="subcellular location">
    <subcellularLocation>
        <location evidence="1">Plastid</location>
        <location evidence="1">Chloroplast thylakoid membrane</location>
        <topology evidence="1">Single-pass membrane protein</topology>
    </subcellularLocation>
</comment>
<comment type="similarity">
    <text evidence="1">Belongs to the PsbI family.</text>
</comment>